<proteinExistence type="inferred from homology"/>
<evidence type="ECO:0000255" key="1">
    <source>
        <dbReference type="HAMAP-Rule" id="MF_01720"/>
    </source>
</evidence>
<accession>Q7N6F9</accession>
<keyword id="KW-0046">Antibiotic resistance</keyword>
<keyword id="KW-0067">ATP-binding</keyword>
<keyword id="KW-0997">Cell inner membrane</keyword>
<keyword id="KW-1003">Cell membrane</keyword>
<keyword id="KW-0472">Membrane</keyword>
<keyword id="KW-0547">Nucleotide-binding</keyword>
<keyword id="KW-1185">Reference proteome</keyword>
<keyword id="KW-1278">Translocase</keyword>
<keyword id="KW-0812">Transmembrane</keyword>
<keyword id="KW-1133">Transmembrane helix</keyword>
<keyword id="KW-0813">Transport</keyword>
<feature type="chain" id="PRO_0000269955" description="Macrolide export ATP-binding/permease protein MacB">
    <location>
        <begin position="1"/>
        <end position="647"/>
    </location>
</feature>
<feature type="transmembrane region" description="Helical" evidence="1">
    <location>
        <begin position="272"/>
        <end position="292"/>
    </location>
</feature>
<feature type="transmembrane region" description="Helical" evidence="1">
    <location>
        <begin position="522"/>
        <end position="542"/>
    </location>
</feature>
<feature type="transmembrane region" description="Helical" evidence="1">
    <location>
        <begin position="576"/>
        <end position="596"/>
    </location>
</feature>
<feature type="transmembrane region" description="Helical" evidence="1">
    <location>
        <begin position="610"/>
        <end position="630"/>
    </location>
</feature>
<feature type="domain" description="ABC transporter" evidence="1">
    <location>
        <begin position="5"/>
        <end position="243"/>
    </location>
</feature>
<feature type="binding site" evidence="1">
    <location>
        <begin position="41"/>
        <end position="48"/>
    </location>
    <ligand>
        <name>ATP</name>
        <dbReference type="ChEBI" id="CHEBI:30616"/>
    </ligand>
</feature>
<reference key="1">
    <citation type="journal article" date="2003" name="Nat. Biotechnol.">
        <title>The genome sequence of the entomopathogenic bacterium Photorhabdus luminescens.</title>
        <authorList>
            <person name="Duchaud E."/>
            <person name="Rusniok C."/>
            <person name="Frangeul L."/>
            <person name="Buchrieser C."/>
            <person name="Givaudan A."/>
            <person name="Taourit S."/>
            <person name="Bocs S."/>
            <person name="Boursaux-Eude C."/>
            <person name="Chandler M."/>
            <person name="Charles J.-F."/>
            <person name="Dassa E."/>
            <person name="Derose R."/>
            <person name="Derzelle S."/>
            <person name="Freyssinet G."/>
            <person name="Gaudriault S."/>
            <person name="Medigue C."/>
            <person name="Lanois A."/>
            <person name="Powell K."/>
            <person name="Siguier P."/>
            <person name="Vincent R."/>
            <person name="Wingate V."/>
            <person name="Zouine M."/>
            <person name="Glaser P."/>
            <person name="Boemare N."/>
            <person name="Danchin A."/>
            <person name="Kunst F."/>
        </authorList>
    </citation>
    <scope>NUCLEOTIDE SEQUENCE [LARGE SCALE GENOMIC DNA]</scope>
    <source>
        <strain>DSM 15139 / CIP 105565 / TT01</strain>
    </source>
</reference>
<organism>
    <name type="scientific">Photorhabdus laumondii subsp. laumondii (strain DSM 15139 / CIP 105565 / TT01)</name>
    <name type="common">Photorhabdus luminescens subsp. laumondii</name>
    <dbReference type="NCBI Taxonomy" id="243265"/>
    <lineage>
        <taxon>Bacteria</taxon>
        <taxon>Pseudomonadati</taxon>
        <taxon>Pseudomonadota</taxon>
        <taxon>Gammaproteobacteria</taxon>
        <taxon>Enterobacterales</taxon>
        <taxon>Morganellaceae</taxon>
        <taxon>Photorhabdus</taxon>
    </lineage>
</organism>
<name>MACB_PHOLL</name>
<dbReference type="EC" id="7.6.2.-" evidence="1"/>
<dbReference type="EMBL" id="BX571864">
    <property type="protein sequence ID" value="CAE13884.1"/>
    <property type="molecule type" value="Genomic_DNA"/>
</dbReference>
<dbReference type="RefSeq" id="WP_011145888.1">
    <property type="nucleotide sequence ID" value="NC_005126.1"/>
</dbReference>
<dbReference type="SMR" id="Q7N6F9"/>
<dbReference type="STRING" id="243265.plu1591"/>
<dbReference type="GeneID" id="48847879"/>
<dbReference type="KEGG" id="plu:plu1591"/>
<dbReference type="eggNOG" id="COG0577">
    <property type="taxonomic scope" value="Bacteria"/>
</dbReference>
<dbReference type="eggNOG" id="COG1136">
    <property type="taxonomic scope" value="Bacteria"/>
</dbReference>
<dbReference type="HOGENOM" id="CLU_000604_78_3_6"/>
<dbReference type="OrthoDB" id="9770036at2"/>
<dbReference type="Proteomes" id="UP000002514">
    <property type="component" value="Chromosome"/>
</dbReference>
<dbReference type="GO" id="GO:0005886">
    <property type="term" value="C:plasma membrane"/>
    <property type="evidence" value="ECO:0007669"/>
    <property type="project" value="UniProtKB-SubCell"/>
</dbReference>
<dbReference type="GO" id="GO:0005524">
    <property type="term" value="F:ATP binding"/>
    <property type="evidence" value="ECO:0007669"/>
    <property type="project" value="UniProtKB-KW"/>
</dbReference>
<dbReference type="GO" id="GO:0016887">
    <property type="term" value="F:ATP hydrolysis activity"/>
    <property type="evidence" value="ECO:0007669"/>
    <property type="project" value="InterPro"/>
</dbReference>
<dbReference type="GO" id="GO:0022857">
    <property type="term" value="F:transmembrane transporter activity"/>
    <property type="evidence" value="ECO:0007669"/>
    <property type="project" value="TreeGrafter"/>
</dbReference>
<dbReference type="GO" id="GO:0046677">
    <property type="term" value="P:response to antibiotic"/>
    <property type="evidence" value="ECO:0007669"/>
    <property type="project" value="UniProtKB-KW"/>
</dbReference>
<dbReference type="CDD" id="cd03255">
    <property type="entry name" value="ABC_MJ0796_LolCDE_FtsE"/>
    <property type="match status" value="1"/>
</dbReference>
<dbReference type="FunFam" id="3.40.50.300:FF:000032">
    <property type="entry name" value="Export ABC transporter ATP-binding protein"/>
    <property type="match status" value="1"/>
</dbReference>
<dbReference type="Gene3D" id="3.40.50.300">
    <property type="entry name" value="P-loop containing nucleotide triphosphate hydrolases"/>
    <property type="match status" value="1"/>
</dbReference>
<dbReference type="InterPro" id="IPR003593">
    <property type="entry name" value="AAA+_ATPase"/>
</dbReference>
<dbReference type="InterPro" id="IPR003838">
    <property type="entry name" value="ABC3_permease_C"/>
</dbReference>
<dbReference type="InterPro" id="IPR003439">
    <property type="entry name" value="ABC_transporter-like_ATP-bd"/>
</dbReference>
<dbReference type="InterPro" id="IPR017871">
    <property type="entry name" value="ABC_transporter-like_CS"/>
</dbReference>
<dbReference type="InterPro" id="IPR017911">
    <property type="entry name" value="MacB-like_ATP-bd"/>
</dbReference>
<dbReference type="InterPro" id="IPR025857">
    <property type="entry name" value="MacB_PCD"/>
</dbReference>
<dbReference type="InterPro" id="IPR050250">
    <property type="entry name" value="Macrolide_Exporter_MacB"/>
</dbReference>
<dbReference type="InterPro" id="IPR027417">
    <property type="entry name" value="P-loop_NTPase"/>
</dbReference>
<dbReference type="NCBIfam" id="NF007826">
    <property type="entry name" value="PRK10535.1"/>
    <property type="match status" value="1"/>
</dbReference>
<dbReference type="PANTHER" id="PTHR30572:SF7">
    <property type="entry name" value="MACROLIDE EXPORT ATP-BINDING_PERMEASE PROTEIN MACB"/>
    <property type="match status" value="1"/>
</dbReference>
<dbReference type="PANTHER" id="PTHR30572">
    <property type="entry name" value="MEMBRANE COMPONENT OF TRANSPORTER-RELATED"/>
    <property type="match status" value="1"/>
</dbReference>
<dbReference type="Pfam" id="PF00005">
    <property type="entry name" value="ABC_tran"/>
    <property type="match status" value="1"/>
</dbReference>
<dbReference type="Pfam" id="PF02687">
    <property type="entry name" value="FtsX"/>
    <property type="match status" value="1"/>
</dbReference>
<dbReference type="Pfam" id="PF12704">
    <property type="entry name" value="MacB_PCD"/>
    <property type="match status" value="1"/>
</dbReference>
<dbReference type="SMART" id="SM00382">
    <property type="entry name" value="AAA"/>
    <property type="match status" value="1"/>
</dbReference>
<dbReference type="SUPFAM" id="SSF52540">
    <property type="entry name" value="P-loop containing nucleoside triphosphate hydrolases"/>
    <property type="match status" value="1"/>
</dbReference>
<dbReference type="PROSITE" id="PS00211">
    <property type="entry name" value="ABC_TRANSPORTER_1"/>
    <property type="match status" value="1"/>
</dbReference>
<dbReference type="PROSITE" id="PS50893">
    <property type="entry name" value="ABC_TRANSPORTER_2"/>
    <property type="match status" value="1"/>
</dbReference>
<dbReference type="PROSITE" id="PS51267">
    <property type="entry name" value="MACB"/>
    <property type="match status" value="1"/>
</dbReference>
<comment type="function">
    <text evidence="1">Part of the tripartite efflux system MacAB-TolC. MacB is a non-canonical ABC transporter that contains transmembrane domains (TMD), which form a pore in the inner membrane, and an ATP-binding domain (NBD), which is responsible for energy generation. Confers resistance against macrolides.</text>
</comment>
<comment type="subunit">
    <text evidence="1">Homodimer. Part of the tripartite efflux system MacAB-TolC, which is composed of an inner membrane transporter, MacB, a periplasmic membrane fusion protein, MacA, and an outer membrane component, TolC. The complex forms a large protein conduit and can translocate molecules across both the inner and outer membranes. Interacts with MacA.</text>
</comment>
<comment type="subcellular location">
    <subcellularLocation>
        <location evidence="1">Cell inner membrane</location>
        <topology evidence="1">Multi-pass membrane protein</topology>
    </subcellularLocation>
</comment>
<comment type="similarity">
    <text evidence="1">Belongs to the ABC transporter superfamily. Macrolide exporter (TC 3.A.1.122) family.</text>
</comment>
<protein>
    <recommendedName>
        <fullName evidence="1">Macrolide export ATP-binding/permease protein MacB</fullName>
        <ecNumber evidence="1">7.6.2.-</ecNumber>
    </recommendedName>
</protein>
<sequence length="647" mass="70692">MNALLELKGIERSYPAGEQQIKVLDDVTLSIYAGEMVAIIGASGSGKSTLMNILGCLDQPSNGEYRVAGQNVAELNNDELAALRREHFGFIFQRYHLLTHLTAEQNVEIPAIYAGAAKAARRQRAIELLGRLGLEDRIYYQPGQLSGGQQQRVSIARALMNGGQVILADEPTGALDSHSGEEVMAILKQLCEQGHTVIIVTHDPKIAAQAQRIIEIKDGHIMSDSGTQVSRKITQTPSLTSKISSIRQIFGRFNEALFMAWRAMVVNKMRTLLTMLGIIIGIASVVTILVIGDAARASVLSDIKEIATNTIDIYPGEDFGIDDPVSKQALKIADADAIKVQPYILAVSPEIEGQMRLRKGNIDVSSKVTGVGDEYFQVYALRFAQGIGFSLDMIRRQGQVVVIDKNTQRKLFPHQKNVIGEVILVGNMPATIVGVIANRESAFGNSKLLHIWLPYSTMTSRLMNRSYLDSITVRVKDDYNSKDAEKMIVQLLTLRHGKKDIFTDNVDMLVKAAEKTAHTLQLFLTMVAVISLIVGGIGVMNIMLVSVTERTREIGIRMAVGARTSDVRQQFLIEAILVCLVGGVLGIGLSYTIAFIAQLALPGWHFVFQPIALLSAFACSTAIGVIFGFLPARNAARLDPIEALARE</sequence>
<gene>
    <name evidence="1" type="primary">macB</name>
    <name type="ordered locus">plu1591</name>
</gene>